<protein>
    <recommendedName>
        <fullName evidence="1">Probable transcriptional regulatory protein tll0175</fullName>
    </recommendedName>
</protein>
<evidence type="ECO:0000255" key="1">
    <source>
        <dbReference type="HAMAP-Rule" id="MF_00693"/>
    </source>
</evidence>
<reference key="1">
    <citation type="journal article" date="2002" name="DNA Res.">
        <title>Complete genome structure of the thermophilic cyanobacterium Thermosynechococcus elongatus BP-1.</title>
        <authorList>
            <person name="Nakamura Y."/>
            <person name="Kaneko T."/>
            <person name="Sato S."/>
            <person name="Ikeuchi M."/>
            <person name="Katoh H."/>
            <person name="Sasamoto S."/>
            <person name="Watanabe A."/>
            <person name="Iriguchi M."/>
            <person name="Kawashima K."/>
            <person name="Kimura T."/>
            <person name="Kishida Y."/>
            <person name="Kiyokawa C."/>
            <person name="Kohara M."/>
            <person name="Matsumoto M."/>
            <person name="Matsuno A."/>
            <person name="Nakazaki N."/>
            <person name="Shimpo S."/>
            <person name="Sugimoto M."/>
            <person name="Takeuchi C."/>
            <person name="Yamada M."/>
            <person name="Tabata S."/>
        </authorList>
    </citation>
    <scope>NUCLEOTIDE SEQUENCE [LARGE SCALE GENOMIC DNA]</scope>
    <source>
        <strain>NIES-2133 / IAM M-273 / BP-1</strain>
    </source>
</reference>
<name>Y175_THEVB</name>
<organism>
    <name type="scientific">Thermosynechococcus vestitus (strain NIES-2133 / IAM M-273 / BP-1)</name>
    <dbReference type="NCBI Taxonomy" id="197221"/>
    <lineage>
        <taxon>Bacteria</taxon>
        <taxon>Bacillati</taxon>
        <taxon>Cyanobacteriota</taxon>
        <taxon>Cyanophyceae</taxon>
        <taxon>Acaryochloridales</taxon>
        <taxon>Thermosynechococcaceae</taxon>
        <taxon>Thermosynechococcus</taxon>
    </lineage>
</organism>
<accession>Q8DME3</accession>
<proteinExistence type="inferred from homology"/>
<gene>
    <name type="ordered locus">tll0175</name>
</gene>
<keyword id="KW-0963">Cytoplasm</keyword>
<keyword id="KW-0238">DNA-binding</keyword>
<keyword id="KW-1185">Reference proteome</keyword>
<keyword id="KW-0804">Transcription</keyword>
<keyword id="KW-0805">Transcription regulation</keyword>
<feature type="chain" id="PRO_0000175913" description="Probable transcriptional regulatory protein tll0175">
    <location>
        <begin position="1"/>
        <end position="250"/>
    </location>
</feature>
<sequence>MAGHSKWANIKRQKARVDAQKGKIFARLSRAIIIAARHGGGDPAGNFQLRSAIEKAKAAGIPSENIERAIAKGTGTLDSDAPLEAIRYEGYGPGGVAFLIEALTDNRNRTAADLRAAFNKQGGNLGETGCVGWMFEQWGIVTVTAPRDEEAFLEALLAADVETYEILEEVAEVRCPVPALETVSETLKEHGYTVLDTESRWIPMNTVEITDEDTARRVLKLMDALENLDDIQSVATNVTMSDALMEAMYV</sequence>
<comment type="subcellular location">
    <subcellularLocation>
        <location evidence="1">Cytoplasm</location>
    </subcellularLocation>
</comment>
<comment type="similarity">
    <text evidence="1">Belongs to the TACO1 family.</text>
</comment>
<dbReference type="EMBL" id="BA000039">
    <property type="protein sequence ID" value="BAC07728.1"/>
    <property type="molecule type" value="Genomic_DNA"/>
</dbReference>
<dbReference type="RefSeq" id="NP_680966.1">
    <property type="nucleotide sequence ID" value="NC_004113.1"/>
</dbReference>
<dbReference type="RefSeq" id="WP_011056030.1">
    <property type="nucleotide sequence ID" value="NC_004113.1"/>
</dbReference>
<dbReference type="SMR" id="Q8DME3"/>
<dbReference type="STRING" id="197221.gene:10746756"/>
<dbReference type="EnsemblBacteria" id="BAC07728">
    <property type="protein sequence ID" value="BAC07728"/>
    <property type="gene ID" value="BAC07728"/>
</dbReference>
<dbReference type="KEGG" id="tel:tll0175"/>
<dbReference type="PATRIC" id="fig|197221.4.peg.181"/>
<dbReference type="eggNOG" id="COG0217">
    <property type="taxonomic scope" value="Bacteria"/>
</dbReference>
<dbReference type="Proteomes" id="UP000000440">
    <property type="component" value="Chromosome"/>
</dbReference>
<dbReference type="GO" id="GO:0005829">
    <property type="term" value="C:cytosol"/>
    <property type="evidence" value="ECO:0007669"/>
    <property type="project" value="TreeGrafter"/>
</dbReference>
<dbReference type="GO" id="GO:0003677">
    <property type="term" value="F:DNA binding"/>
    <property type="evidence" value="ECO:0007669"/>
    <property type="project" value="UniProtKB-UniRule"/>
</dbReference>
<dbReference type="GO" id="GO:0006355">
    <property type="term" value="P:regulation of DNA-templated transcription"/>
    <property type="evidence" value="ECO:0007669"/>
    <property type="project" value="UniProtKB-UniRule"/>
</dbReference>
<dbReference type="FunFam" id="1.10.10.200:FF:000002">
    <property type="entry name" value="Probable transcriptional regulatory protein CLM62_37755"/>
    <property type="match status" value="1"/>
</dbReference>
<dbReference type="Gene3D" id="1.10.10.200">
    <property type="match status" value="1"/>
</dbReference>
<dbReference type="Gene3D" id="3.30.70.980">
    <property type="match status" value="2"/>
</dbReference>
<dbReference type="HAMAP" id="MF_00693">
    <property type="entry name" value="Transcrip_reg_TACO1"/>
    <property type="match status" value="1"/>
</dbReference>
<dbReference type="InterPro" id="IPR017856">
    <property type="entry name" value="Integrase-like_N"/>
</dbReference>
<dbReference type="InterPro" id="IPR048300">
    <property type="entry name" value="TACO1_YebC-like_2nd/3rd_dom"/>
</dbReference>
<dbReference type="InterPro" id="IPR049083">
    <property type="entry name" value="TACO1_YebC_N"/>
</dbReference>
<dbReference type="InterPro" id="IPR002876">
    <property type="entry name" value="Transcrip_reg_TACO1-like"/>
</dbReference>
<dbReference type="InterPro" id="IPR026564">
    <property type="entry name" value="Transcrip_reg_TACO1-like_dom3"/>
</dbReference>
<dbReference type="InterPro" id="IPR029072">
    <property type="entry name" value="YebC-like"/>
</dbReference>
<dbReference type="NCBIfam" id="NF001030">
    <property type="entry name" value="PRK00110.1"/>
    <property type="match status" value="1"/>
</dbReference>
<dbReference type="NCBIfam" id="NF009044">
    <property type="entry name" value="PRK12378.1"/>
    <property type="match status" value="1"/>
</dbReference>
<dbReference type="NCBIfam" id="TIGR01033">
    <property type="entry name" value="YebC/PmpR family DNA-binding transcriptional regulator"/>
    <property type="match status" value="1"/>
</dbReference>
<dbReference type="PANTHER" id="PTHR12532:SF6">
    <property type="entry name" value="TRANSCRIPTIONAL REGULATORY PROTEIN YEBC-RELATED"/>
    <property type="match status" value="1"/>
</dbReference>
<dbReference type="PANTHER" id="PTHR12532">
    <property type="entry name" value="TRANSLATIONAL ACTIVATOR OF CYTOCHROME C OXIDASE 1"/>
    <property type="match status" value="1"/>
</dbReference>
<dbReference type="Pfam" id="PF20772">
    <property type="entry name" value="TACO1_YebC_N"/>
    <property type="match status" value="1"/>
</dbReference>
<dbReference type="Pfam" id="PF01709">
    <property type="entry name" value="Transcrip_reg"/>
    <property type="match status" value="1"/>
</dbReference>
<dbReference type="SUPFAM" id="SSF75625">
    <property type="entry name" value="YebC-like"/>
    <property type="match status" value="1"/>
</dbReference>